<protein>
    <recommendedName>
        <fullName evidence="2">Elongation factor Tu</fullName>
        <shortName evidence="2">EF-Tu</shortName>
        <ecNumber evidence="2">3.6.5.3</ecNumber>
    </recommendedName>
</protein>
<feature type="chain" id="PRO_1000203009" description="Elongation factor Tu">
    <location>
        <begin position="1"/>
        <end position="395"/>
    </location>
</feature>
<feature type="domain" description="tr-type G">
    <location>
        <begin position="10"/>
        <end position="204"/>
    </location>
</feature>
<feature type="region of interest" description="G1" evidence="1">
    <location>
        <begin position="19"/>
        <end position="26"/>
    </location>
</feature>
<feature type="region of interest" description="G2" evidence="1">
    <location>
        <begin position="61"/>
        <end position="65"/>
    </location>
</feature>
<feature type="region of interest" description="G3" evidence="1">
    <location>
        <begin position="82"/>
        <end position="85"/>
    </location>
</feature>
<feature type="region of interest" description="G4" evidence="1">
    <location>
        <begin position="137"/>
        <end position="140"/>
    </location>
</feature>
<feature type="region of interest" description="G5" evidence="1">
    <location>
        <begin position="173"/>
        <end position="175"/>
    </location>
</feature>
<feature type="binding site" evidence="2">
    <location>
        <begin position="19"/>
        <end position="26"/>
    </location>
    <ligand>
        <name>GTP</name>
        <dbReference type="ChEBI" id="CHEBI:37565"/>
    </ligand>
</feature>
<feature type="binding site" evidence="2">
    <location>
        <position position="26"/>
    </location>
    <ligand>
        <name>Mg(2+)</name>
        <dbReference type="ChEBI" id="CHEBI:18420"/>
    </ligand>
</feature>
<feature type="binding site" evidence="2">
    <location>
        <begin position="82"/>
        <end position="86"/>
    </location>
    <ligand>
        <name>GTP</name>
        <dbReference type="ChEBI" id="CHEBI:37565"/>
    </ligand>
</feature>
<feature type="binding site" evidence="2">
    <location>
        <begin position="137"/>
        <end position="140"/>
    </location>
    <ligand>
        <name>GTP</name>
        <dbReference type="ChEBI" id="CHEBI:37565"/>
    </ligand>
</feature>
<proteinExistence type="inferred from homology"/>
<evidence type="ECO:0000250" key="1"/>
<evidence type="ECO:0000255" key="2">
    <source>
        <dbReference type="HAMAP-Rule" id="MF_00118"/>
    </source>
</evidence>
<reference key="1">
    <citation type="journal article" date="2009" name="Proc. Natl. Acad. Sci. U.S.A.">
        <title>Characterizing a model human gut microbiota composed of members of its two dominant bacterial phyla.</title>
        <authorList>
            <person name="Mahowald M.A."/>
            <person name="Rey F.E."/>
            <person name="Seedorf H."/>
            <person name="Turnbaugh P.J."/>
            <person name="Fulton R.S."/>
            <person name="Wollam A."/>
            <person name="Shah N."/>
            <person name="Wang C."/>
            <person name="Magrini V."/>
            <person name="Wilson R.K."/>
            <person name="Cantarel B.L."/>
            <person name="Coutinho P.M."/>
            <person name="Henrissat B."/>
            <person name="Crock L.W."/>
            <person name="Russell A."/>
            <person name="Verberkmoes N.C."/>
            <person name="Hettich R.L."/>
            <person name="Gordon J.I."/>
        </authorList>
    </citation>
    <scope>NUCLEOTIDE SEQUENCE [LARGE SCALE GENOMIC DNA]</scope>
    <source>
        <strain>ATCC 33656 / DSM 3377 / JCM 17463 / KCTC 5835 / LMG 30912 / VPI 0990</strain>
    </source>
</reference>
<dbReference type="EC" id="3.6.5.3" evidence="2"/>
<dbReference type="EMBL" id="CP001107">
    <property type="protein sequence ID" value="ACR74174.1"/>
    <property type="molecule type" value="Genomic_DNA"/>
</dbReference>
<dbReference type="RefSeq" id="WP_012741295.1">
    <property type="nucleotide sequence ID" value="NC_012781.1"/>
</dbReference>
<dbReference type="SMR" id="C4ZB99"/>
<dbReference type="STRING" id="515619.EUBREC_0383"/>
<dbReference type="PaxDb" id="515619-EUBREC_0383"/>
<dbReference type="GeneID" id="86987297"/>
<dbReference type="KEGG" id="ere:EUBREC_0383"/>
<dbReference type="HOGENOM" id="CLU_007265_0_1_9"/>
<dbReference type="Proteomes" id="UP000001477">
    <property type="component" value="Chromosome"/>
</dbReference>
<dbReference type="GO" id="GO:0005829">
    <property type="term" value="C:cytosol"/>
    <property type="evidence" value="ECO:0007669"/>
    <property type="project" value="TreeGrafter"/>
</dbReference>
<dbReference type="GO" id="GO:0005525">
    <property type="term" value="F:GTP binding"/>
    <property type="evidence" value="ECO:0007669"/>
    <property type="project" value="UniProtKB-UniRule"/>
</dbReference>
<dbReference type="GO" id="GO:0003924">
    <property type="term" value="F:GTPase activity"/>
    <property type="evidence" value="ECO:0007669"/>
    <property type="project" value="InterPro"/>
</dbReference>
<dbReference type="GO" id="GO:0003746">
    <property type="term" value="F:translation elongation factor activity"/>
    <property type="evidence" value="ECO:0007669"/>
    <property type="project" value="UniProtKB-UniRule"/>
</dbReference>
<dbReference type="CDD" id="cd01884">
    <property type="entry name" value="EF_Tu"/>
    <property type="match status" value="1"/>
</dbReference>
<dbReference type="CDD" id="cd03697">
    <property type="entry name" value="EFTU_II"/>
    <property type="match status" value="1"/>
</dbReference>
<dbReference type="CDD" id="cd03707">
    <property type="entry name" value="EFTU_III"/>
    <property type="match status" value="1"/>
</dbReference>
<dbReference type="FunFam" id="2.40.30.10:FF:000001">
    <property type="entry name" value="Elongation factor Tu"/>
    <property type="match status" value="1"/>
</dbReference>
<dbReference type="FunFam" id="3.40.50.300:FF:000003">
    <property type="entry name" value="Elongation factor Tu"/>
    <property type="match status" value="1"/>
</dbReference>
<dbReference type="Gene3D" id="3.40.50.300">
    <property type="entry name" value="P-loop containing nucleotide triphosphate hydrolases"/>
    <property type="match status" value="1"/>
</dbReference>
<dbReference type="Gene3D" id="2.40.30.10">
    <property type="entry name" value="Translation factors"/>
    <property type="match status" value="2"/>
</dbReference>
<dbReference type="HAMAP" id="MF_00118_B">
    <property type="entry name" value="EF_Tu_B"/>
    <property type="match status" value="1"/>
</dbReference>
<dbReference type="InterPro" id="IPR041709">
    <property type="entry name" value="EF-Tu_GTP-bd"/>
</dbReference>
<dbReference type="InterPro" id="IPR050055">
    <property type="entry name" value="EF-Tu_GTPase"/>
</dbReference>
<dbReference type="InterPro" id="IPR004161">
    <property type="entry name" value="EFTu-like_2"/>
</dbReference>
<dbReference type="InterPro" id="IPR033720">
    <property type="entry name" value="EFTU_2"/>
</dbReference>
<dbReference type="InterPro" id="IPR031157">
    <property type="entry name" value="G_TR_CS"/>
</dbReference>
<dbReference type="InterPro" id="IPR027417">
    <property type="entry name" value="P-loop_NTPase"/>
</dbReference>
<dbReference type="InterPro" id="IPR005225">
    <property type="entry name" value="Small_GTP-bd"/>
</dbReference>
<dbReference type="InterPro" id="IPR000795">
    <property type="entry name" value="T_Tr_GTP-bd_dom"/>
</dbReference>
<dbReference type="InterPro" id="IPR009000">
    <property type="entry name" value="Transl_B-barrel_sf"/>
</dbReference>
<dbReference type="InterPro" id="IPR009001">
    <property type="entry name" value="Transl_elong_EF1A/Init_IF2_C"/>
</dbReference>
<dbReference type="InterPro" id="IPR004541">
    <property type="entry name" value="Transl_elong_EFTu/EF1A_bac/org"/>
</dbReference>
<dbReference type="InterPro" id="IPR004160">
    <property type="entry name" value="Transl_elong_EFTu/EF1A_C"/>
</dbReference>
<dbReference type="NCBIfam" id="TIGR00485">
    <property type="entry name" value="EF-Tu"/>
    <property type="match status" value="1"/>
</dbReference>
<dbReference type="NCBIfam" id="NF000766">
    <property type="entry name" value="PRK00049.1"/>
    <property type="match status" value="1"/>
</dbReference>
<dbReference type="NCBIfam" id="NF009372">
    <property type="entry name" value="PRK12735.1"/>
    <property type="match status" value="1"/>
</dbReference>
<dbReference type="NCBIfam" id="NF009373">
    <property type="entry name" value="PRK12736.1"/>
    <property type="match status" value="1"/>
</dbReference>
<dbReference type="NCBIfam" id="TIGR00231">
    <property type="entry name" value="small_GTP"/>
    <property type="match status" value="1"/>
</dbReference>
<dbReference type="PANTHER" id="PTHR43721:SF22">
    <property type="entry name" value="ELONGATION FACTOR TU, MITOCHONDRIAL"/>
    <property type="match status" value="1"/>
</dbReference>
<dbReference type="PANTHER" id="PTHR43721">
    <property type="entry name" value="ELONGATION FACTOR TU-RELATED"/>
    <property type="match status" value="1"/>
</dbReference>
<dbReference type="Pfam" id="PF00009">
    <property type="entry name" value="GTP_EFTU"/>
    <property type="match status" value="1"/>
</dbReference>
<dbReference type="Pfam" id="PF03144">
    <property type="entry name" value="GTP_EFTU_D2"/>
    <property type="match status" value="1"/>
</dbReference>
<dbReference type="Pfam" id="PF03143">
    <property type="entry name" value="GTP_EFTU_D3"/>
    <property type="match status" value="1"/>
</dbReference>
<dbReference type="PRINTS" id="PR00315">
    <property type="entry name" value="ELONGATNFCT"/>
</dbReference>
<dbReference type="SUPFAM" id="SSF50465">
    <property type="entry name" value="EF-Tu/eEF-1alpha/eIF2-gamma C-terminal domain"/>
    <property type="match status" value="1"/>
</dbReference>
<dbReference type="SUPFAM" id="SSF52540">
    <property type="entry name" value="P-loop containing nucleoside triphosphate hydrolases"/>
    <property type="match status" value="1"/>
</dbReference>
<dbReference type="SUPFAM" id="SSF50447">
    <property type="entry name" value="Translation proteins"/>
    <property type="match status" value="1"/>
</dbReference>
<dbReference type="PROSITE" id="PS00301">
    <property type="entry name" value="G_TR_1"/>
    <property type="match status" value="1"/>
</dbReference>
<dbReference type="PROSITE" id="PS51722">
    <property type="entry name" value="G_TR_2"/>
    <property type="match status" value="1"/>
</dbReference>
<gene>
    <name evidence="2" type="primary">tuf</name>
    <name type="ordered locus">EUBREC_0383</name>
</gene>
<organism>
    <name type="scientific">Agathobacter rectalis (strain ATCC 33656 / DSM 3377 / JCM 17463 / KCTC 5835 / VPI 0990)</name>
    <name type="common">Eubacterium rectale</name>
    <dbReference type="NCBI Taxonomy" id="515619"/>
    <lineage>
        <taxon>Bacteria</taxon>
        <taxon>Bacillati</taxon>
        <taxon>Bacillota</taxon>
        <taxon>Clostridia</taxon>
        <taxon>Lachnospirales</taxon>
        <taxon>Lachnospiraceae</taxon>
        <taxon>Agathobacter</taxon>
    </lineage>
</organism>
<accession>C4ZB99</accession>
<sequence length="395" mass="43410">MAKAKFERTKPHCNIGTIGHVDHGKTTLTAAITAVLAARVAGNTATDFANIDKAPEERERGITISTAHVEYETEKRHYAHVDCPGHADYVKNMITGAAQMDGAILVVAATDGVMAQTKEHILLSRQVGVPYIIVFLNKCDMVDDPELIELVEMEVTEQLEEYGFNDCPIIQGSALKALEDPNGPWGDKIMELMDTVDSYIPDPQRDTDKPFLMPVEDVFTITGRGTVATGRVERGTLHLNDELEILGVKEDVQKTVVTGIEMFRKQLDEAQAGDNIGALLRGINRDQIVRGQVLAKPGTVTCHHKFTAQVYVLTKDEGGRHTPFFNNYRPQFYFRTTDVTGVCELPAGTEMCMPGDNVEMTIELIHPVAMEQGLTFAIREGGRTVGSGRVATVIE</sequence>
<keyword id="KW-0963">Cytoplasm</keyword>
<keyword id="KW-0251">Elongation factor</keyword>
<keyword id="KW-0342">GTP-binding</keyword>
<keyword id="KW-0378">Hydrolase</keyword>
<keyword id="KW-0460">Magnesium</keyword>
<keyword id="KW-0479">Metal-binding</keyword>
<keyword id="KW-0547">Nucleotide-binding</keyword>
<keyword id="KW-0648">Protein biosynthesis</keyword>
<name>EFTU_AGARV</name>
<comment type="function">
    <text evidence="2">GTP hydrolase that promotes the GTP-dependent binding of aminoacyl-tRNA to the A-site of ribosomes during protein biosynthesis.</text>
</comment>
<comment type="catalytic activity">
    <reaction evidence="2">
        <text>GTP + H2O = GDP + phosphate + H(+)</text>
        <dbReference type="Rhea" id="RHEA:19669"/>
        <dbReference type="ChEBI" id="CHEBI:15377"/>
        <dbReference type="ChEBI" id="CHEBI:15378"/>
        <dbReference type="ChEBI" id="CHEBI:37565"/>
        <dbReference type="ChEBI" id="CHEBI:43474"/>
        <dbReference type="ChEBI" id="CHEBI:58189"/>
        <dbReference type="EC" id="3.6.5.3"/>
    </reaction>
    <physiologicalReaction direction="left-to-right" evidence="2">
        <dbReference type="Rhea" id="RHEA:19670"/>
    </physiologicalReaction>
</comment>
<comment type="subunit">
    <text evidence="2">Monomer.</text>
</comment>
<comment type="subcellular location">
    <subcellularLocation>
        <location evidence="2">Cytoplasm</location>
    </subcellularLocation>
</comment>
<comment type="similarity">
    <text evidence="2">Belongs to the TRAFAC class translation factor GTPase superfamily. Classic translation factor GTPase family. EF-Tu/EF-1A subfamily.</text>
</comment>